<proteinExistence type="inferred from homology"/>
<organism>
    <name type="scientific">Ehrlichia ruminantium (strain Welgevonden)</name>
    <dbReference type="NCBI Taxonomy" id="254945"/>
    <lineage>
        <taxon>Bacteria</taxon>
        <taxon>Pseudomonadati</taxon>
        <taxon>Pseudomonadota</taxon>
        <taxon>Alphaproteobacteria</taxon>
        <taxon>Rickettsiales</taxon>
        <taxon>Anaplasmataceae</taxon>
        <taxon>Ehrlichia</taxon>
    </lineage>
</organism>
<keyword id="KW-0963">Cytoplasm</keyword>
<keyword id="KW-0441">Lipid A biosynthesis</keyword>
<keyword id="KW-0444">Lipid biosynthesis</keyword>
<keyword id="KW-0443">Lipid metabolism</keyword>
<keyword id="KW-0456">Lyase</keyword>
<protein>
    <recommendedName>
        <fullName evidence="1">3-hydroxyacyl-[acyl-carrier-protein] dehydratase FabZ</fullName>
        <ecNumber evidence="1">4.2.1.59</ecNumber>
    </recommendedName>
    <alternativeName>
        <fullName evidence="1">(3R)-hydroxymyristoyl-[acyl-carrier-protein] dehydratase</fullName>
        <shortName evidence="1">(3R)-hydroxymyristoyl-ACP dehydrase</shortName>
    </alternativeName>
    <alternativeName>
        <fullName evidence="1">Beta-hydroxyacyl-ACP dehydratase</fullName>
    </alternativeName>
</protein>
<name>FABZ_EHRRW</name>
<comment type="function">
    <text evidence="1">Involved in unsaturated fatty acids biosynthesis. Catalyzes the dehydration of short chain beta-hydroxyacyl-ACPs and long chain saturated and unsaturated beta-hydroxyacyl-ACPs.</text>
</comment>
<comment type="catalytic activity">
    <reaction evidence="1">
        <text>a (3R)-hydroxyacyl-[ACP] = a (2E)-enoyl-[ACP] + H2O</text>
        <dbReference type="Rhea" id="RHEA:13097"/>
        <dbReference type="Rhea" id="RHEA-COMP:9925"/>
        <dbReference type="Rhea" id="RHEA-COMP:9945"/>
        <dbReference type="ChEBI" id="CHEBI:15377"/>
        <dbReference type="ChEBI" id="CHEBI:78784"/>
        <dbReference type="ChEBI" id="CHEBI:78827"/>
        <dbReference type="EC" id="4.2.1.59"/>
    </reaction>
</comment>
<comment type="subcellular location">
    <subcellularLocation>
        <location evidence="1">Cytoplasm</location>
    </subcellularLocation>
</comment>
<comment type="similarity">
    <text evidence="1">Belongs to the thioester dehydratase family. FabZ subfamily.</text>
</comment>
<evidence type="ECO:0000255" key="1">
    <source>
        <dbReference type="HAMAP-Rule" id="MF_00406"/>
    </source>
</evidence>
<feature type="chain" id="PRO_1000197295" description="3-hydroxyacyl-[acyl-carrier-protein] dehydratase FabZ">
    <location>
        <begin position="1"/>
        <end position="145"/>
    </location>
</feature>
<feature type="active site" evidence="1">
    <location>
        <position position="49"/>
    </location>
</feature>
<accession>Q5HA53</accession>
<accession>Q5FDX7</accession>
<dbReference type="EC" id="4.2.1.59" evidence="1"/>
<dbReference type="EMBL" id="CR767821">
    <property type="protein sequence ID" value="CAH58563.1"/>
    <property type="molecule type" value="Genomic_DNA"/>
</dbReference>
<dbReference type="EMBL" id="CR925678">
    <property type="protein sequence ID" value="CAI27371.1"/>
    <property type="molecule type" value="Genomic_DNA"/>
</dbReference>
<dbReference type="RefSeq" id="WP_011155507.1">
    <property type="nucleotide sequence ID" value="NC_005295.2"/>
</dbReference>
<dbReference type="SMR" id="Q5HA53"/>
<dbReference type="GeneID" id="33057712"/>
<dbReference type="KEGG" id="eru:Erum8280"/>
<dbReference type="KEGG" id="erw:ERWE_CDS_08770"/>
<dbReference type="eggNOG" id="COG0764">
    <property type="taxonomic scope" value="Bacteria"/>
</dbReference>
<dbReference type="HOGENOM" id="CLU_078912_1_0_5"/>
<dbReference type="Proteomes" id="UP000001021">
    <property type="component" value="Chromosome"/>
</dbReference>
<dbReference type="GO" id="GO:0005737">
    <property type="term" value="C:cytoplasm"/>
    <property type="evidence" value="ECO:0007669"/>
    <property type="project" value="UniProtKB-SubCell"/>
</dbReference>
<dbReference type="GO" id="GO:0016020">
    <property type="term" value="C:membrane"/>
    <property type="evidence" value="ECO:0007669"/>
    <property type="project" value="GOC"/>
</dbReference>
<dbReference type="GO" id="GO:0019171">
    <property type="term" value="F:(3R)-hydroxyacyl-[acyl-carrier-protein] dehydratase activity"/>
    <property type="evidence" value="ECO:0007669"/>
    <property type="project" value="UniProtKB-EC"/>
</dbReference>
<dbReference type="GO" id="GO:0006633">
    <property type="term" value="P:fatty acid biosynthetic process"/>
    <property type="evidence" value="ECO:0007669"/>
    <property type="project" value="UniProtKB-UniRule"/>
</dbReference>
<dbReference type="GO" id="GO:0009245">
    <property type="term" value="P:lipid A biosynthetic process"/>
    <property type="evidence" value="ECO:0007669"/>
    <property type="project" value="UniProtKB-UniRule"/>
</dbReference>
<dbReference type="CDD" id="cd01288">
    <property type="entry name" value="FabZ"/>
    <property type="match status" value="1"/>
</dbReference>
<dbReference type="FunFam" id="3.10.129.10:FF:000001">
    <property type="entry name" value="3-hydroxyacyl-[acyl-carrier-protein] dehydratase FabZ"/>
    <property type="match status" value="1"/>
</dbReference>
<dbReference type="Gene3D" id="3.10.129.10">
    <property type="entry name" value="Hotdog Thioesterase"/>
    <property type="match status" value="1"/>
</dbReference>
<dbReference type="HAMAP" id="MF_00406">
    <property type="entry name" value="FabZ"/>
    <property type="match status" value="1"/>
</dbReference>
<dbReference type="InterPro" id="IPR013114">
    <property type="entry name" value="FabA_FabZ"/>
</dbReference>
<dbReference type="InterPro" id="IPR010084">
    <property type="entry name" value="FabZ"/>
</dbReference>
<dbReference type="InterPro" id="IPR029069">
    <property type="entry name" value="HotDog_dom_sf"/>
</dbReference>
<dbReference type="NCBIfam" id="TIGR01750">
    <property type="entry name" value="fabZ"/>
    <property type="match status" value="1"/>
</dbReference>
<dbReference type="NCBIfam" id="NF000582">
    <property type="entry name" value="PRK00006.1"/>
    <property type="match status" value="1"/>
</dbReference>
<dbReference type="PANTHER" id="PTHR30272">
    <property type="entry name" value="3-HYDROXYACYL-[ACYL-CARRIER-PROTEIN] DEHYDRATASE"/>
    <property type="match status" value="1"/>
</dbReference>
<dbReference type="PANTHER" id="PTHR30272:SF1">
    <property type="entry name" value="3-HYDROXYACYL-[ACYL-CARRIER-PROTEIN] DEHYDRATASE"/>
    <property type="match status" value="1"/>
</dbReference>
<dbReference type="Pfam" id="PF07977">
    <property type="entry name" value="FabA"/>
    <property type="match status" value="1"/>
</dbReference>
<dbReference type="SUPFAM" id="SSF54637">
    <property type="entry name" value="Thioesterase/thiol ester dehydrase-isomerase"/>
    <property type="match status" value="1"/>
</dbReference>
<gene>
    <name evidence="1" type="primary">fabZ</name>
    <name type="ordered locus">Erum8280</name>
    <name type="ordered locus">ERWE_CDS_08770</name>
</gene>
<reference key="1">
    <citation type="journal article" date="2005" name="Proc. Natl. Acad. Sci. U.S.A.">
        <title>The genome of the heartwater agent Ehrlichia ruminantium contains multiple tandem repeats of actively variable copy number.</title>
        <authorList>
            <person name="Collins N.E."/>
            <person name="Liebenberg J."/>
            <person name="de Villiers E.P."/>
            <person name="Brayton K.A."/>
            <person name="Louw E."/>
            <person name="Pretorius A."/>
            <person name="Faber F.E."/>
            <person name="van Heerden H."/>
            <person name="Josemans A."/>
            <person name="van Kleef M."/>
            <person name="Steyn H.C."/>
            <person name="van Strijp M.F."/>
            <person name="Zweygarth E."/>
            <person name="Jongejan F."/>
            <person name="Maillard J.C."/>
            <person name="Berthier D."/>
            <person name="Botha M."/>
            <person name="Joubert F."/>
            <person name="Corton C.H."/>
            <person name="Thomson N.R."/>
            <person name="Allsopp M.T."/>
            <person name="Allsopp B.A."/>
        </authorList>
    </citation>
    <scope>NUCLEOTIDE SEQUENCE [LARGE SCALE GENOMIC DNA]</scope>
    <source>
        <strain>Welgevonden</strain>
    </source>
</reference>
<reference key="2">
    <citation type="journal article" date="2006" name="J. Bacteriol.">
        <title>Comparative genomic analysis of three strains of Ehrlichia ruminantium reveals an active process of genome size plasticity.</title>
        <authorList>
            <person name="Frutos R."/>
            <person name="Viari A."/>
            <person name="Ferraz C."/>
            <person name="Morgat A."/>
            <person name="Eychenie S."/>
            <person name="Kandassamy Y."/>
            <person name="Chantal I."/>
            <person name="Bensaid A."/>
            <person name="Coissac E."/>
            <person name="Vachiery N."/>
            <person name="Demaille J."/>
            <person name="Martinez D."/>
        </authorList>
    </citation>
    <scope>NUCLEOTIDE SEQUENCE [LARGE SCALE GENOMIC DNA]</scope>
    <source>
        <strain>Welgevonden</strain>
    </source>
</reference>
<sequence>MQFNIQDIIKMLPHSYPFLLLDKVTACVPNESATAIKNVTFNEPFFIGHFPNNPVMPGVLIVEAMAQACLVCVMSDSKCNFENYTIYFMSIELAKFRKPVIPGDILTIEVNVIHKRKDTCRFQCFARVDQALASEAQILAMIKKN</sequence>